<keyword id="KW-0963">Cytoplasm</keyword>
<keyword id="KW-0312">Gluconeogenesis</keyword>
<keyword id="KW-0456">Lyase</keyword>
<keyword id="KW-0663">Pyridoxal phosphate</keyword>
<keyword id="KW-1185">Reference proteome</keyword>
<evidence type="ECO:0000250" key="1"/>
<evidence type="ECO:0000305" key="2"/>
<name>SDHL_DICDI</name>
<feature type="chain" id="PRO_0000327858" description="L-serine dehydratase">
    <location>
        <begin position="1"/>
        <end position="350"/>
    </location>
</feature>
<feature type="modified residue" description="N6-(pyridoxal phosphate)lysine" evidence="1">
    <location>
        <position position="62"/>
    </location>
</feature>
<reference key="1">
    <citation type="journal article" date="2002" name="Nature">
        <title>Sequence and analysis of chromosome 2 of Dictyostelium discoideum.</title>
        <authorList>
            <person name="Gloeckner G."/>
            <person name="Eichinger L."/>
            <person name="Szafranski K."/>
            <person name="Pachebat J.A."/>
            <person name="Bankier A.T."/>
            <person name="Dear P.H."/>
            <person name="Lehmann R."/>
            <person name="Baumgart C."/>
            <person name="Parra G."/>
            <person name="Abril J.F."/>
            <person name="Guigo R."/>
            <person name="Kumpf K."/>
            <person name="Tunggal B."/>
            <person name="Cox E.C."/>
            <person name="Quail M.A."/>
            <person name="Platzer M."/>
            <person name="Rosenthal A."/>
            <person name="Noegel A.A."/>
        </authorList>
    </citation>
    <scope>NUCLEOTIDE SEQUENCE [LARGE SCALE GENOMIC DNA]</scope>
    <source>
        <strain>AX4</strain>
    </source>
</reference>
<reference key="2">
    <citation type="journal article" date="2005" name="Nature">
        <title>The genome of the social amoeba Dictyostelium discoideum.</title>
        <authorList>
            <person name="Eichinger L."/>
            <person name="Pachebat J.A."/>
            <person name="Gloeckner G."/>
            <person name="Rajandream M.A."/>
            <person name="Sucgang R."/>
            <person name="Berriman M."/>
            <person name="Song J."/>
            <person name="Olsen R."/>
            <person name="Szafranski K."/>
            <person name="Xu Q."/>
            <person name="Tunggal B."/>
            <person name="Kummerfeld S."/>
            <person name="Madera M."/>
            <person name="Konfortov B.A."/>
            <person name="Rivero F."/>
            <person name="Bankier A.T."/>
            <person name="Lehmann R."/>
            <person name="Hamlin N."/>
            <person name="Davies R."/>
            <person name="Gaudet P."/>
            <person name="Fey P."/>
            <person name="Pilcher K."/>
            <person name="Chen G."/>
            <person name="Saunders D."/>
            <person name="Sodergren E.J."/>
            <person name="Davis P."/>
            <person name="Kerhornou A."/>
            <person name="Nie X."/>
            <person name="Hall N."/>
            <person name="Anjard C."/>
            <person name="Hemphill L."/>
            <person name="Bason N."/>
            <person name="Farbrother P."/>
            <person name="Desany B."/>
            <person name="Just E."/>
            <person name="Morio T."/>
            <person name="Rost R."/>
            <person name="Churcher C.M."/>
            <person name="Cooper J."/>
            <person name="Haydock S."/>
            <person name="van Driessche N."/>
            <person name="Cronin A."/>
            <person name="Goodhead I."/>
            <person name="Muzny D.M."/>
            <person name="Mourier T."/>
            <person name="Pain A."/>
            <person name="Lu M."/>
            <person name="Harper D."/>
            <person name="Lindsay R."/>
            <person name="Hauser H."/>
            <person name="James K.D."/>
            <person name="Quiles M."/>
            <person name="Madan Babu M."/>
            <person name="Saito T."/>
            <person name="Buchrieser C."/>
            <person name="Wardroper A."/>
            <person name="Felder M."/>
            <person name="Thangavelu M."/>
            <person name="Johnson D."/>
            <person name="Knights A."/>
            <person name="Loulseged H."/>
            <person name="Mungall K.L."/>
            <person name="Oliver K."/>
            <person name="Price C."/>
            <person name="Quail M.A."/>
            <person name="Urushihara H."/>
            <person name="Hernandez J."/>
            <person name="Rabbinowitsch E."/>
            <person name="Steffen D."/>
            <person name="Sanders M."/>
            <person name="Ma J."/>
            <person name="Kohara Y."/>
            <person name="Sharp S."/>
            <person name="Simmonds M.N."/>
            <person name="Spiegler S."/>
            <person name="Tivey A."/>
            <person name="Sugano S."/>
            <person name="White B."/>
            <person name="Walker D."/>
            <person name="Woodward J.R."/>
            <person name="Winckler T."/>
            <person name="Tanaka Y."/>
            <person name="Shaulsky G."/>
            <person name="Schleicher M."/>
            <person name="Weinstock G.M."/>
            <person name="Rosenthal A."/>
            <person name="Cox E.C."/>
            <person name="Chisholm R.L."/>
            <person name="Gibbs R.A."/>
            <person name="Loomis W.F."/>
            <person name="Platzer M."/>
            <person name="Kay R.R."/>
            <person name="Williams J.G."/>
            <person name="Dear P.H."/>
            <person name="Noegel A.A."/>
            <person name="Barrell B.G."/>
            <person name="Kuspa A."/>
        </authorList>
    </citation>
    <scope>NUCLEOTIDE SEQUENCE [LARGE SCALE GENOMIC DNA]</scope>
    <source>
        <strain>AX4</strain>
    </source>
</reference>
<gene>
    <name type="primary">sds</name>
    <name type="ORF">DDB_G0272787</name>
</gene>
<dbReference type="EC" id="4.3.1.17"/>
<dbReference type="EMBL" id="AAFI02000008">
    <property type="protein sequence ID" value="EAL71031.1"/>
    <property type="molecule type" value="Genomic_DNA"/>
</dbReference>
<dbReference type="RefSeq" id="XP_644969.1">
    <property type="nucleotide sequence ID" value="XM_639877.1"/>
</dbReference>
<dbReference type="SMR" id="Q86B06"/>
<dbReference type="FunCoup" id="Q86B06">
    <property type="interactions" value="147"/>
</dbReference>
<dbReference type="STRING" id="44689.Q86B06"/>
<dbReference type="PaxDb" id="44689-DDB0230212"/>
<dbReference type="EnsemblProtists" id="EAL71031">
    <property type="protein sequence ID" value="EAL71031"/>
    <property type="gene ID" value="DDB_G0272787"/>
</dbReference>
<dbReference type="GeneID" id="8618646"/>
<dbReference type="KEGG" id="ddi:DDB_G0272787"/>
<dbReference type="dictyBase" id="DDB_G0272787">
    <property type="gene designation" value="sds"/>
</dbReference>
<dbReference type="VEuPathDB" id="AmoebaDB:DDB_G0272787"/>
<dbReference type="eggNOG" id="KOG1250">
    <property type="taxonomic scope" value="Eukaryota"/>
</dbReference>
<dbReference type="HOGENOM" id="CLU_021152_3_0_1"/>
<dbReference type="InParanoid" id="Q86B06"/>
<dbReference type="OMA" id="DGWVNIH"/>
<dbReference type="PhylomeDB" id="Q86B06"/>
<dbReference type="Reactome" id="R-DDI-8849175">
    <property type="pathway name" value="Threonine catabolism"/>
</dbReference>
<dbReference type="UniPathway" id="UPA00138"/>
<dbReference type="PRO" id="PR:Q86B06"/>
<dbReference type="Proteomes" id="UP000002195">
    <property type="component" value="Chromosome 2"/>
</dbReference>
<dbReference type="GO" id="GO:0005737">
    <property type="term" value="C:cytoplasm"/>
    <property type="evidence" value="ECO:0007669"/>
    <property type="project" value="UniProtKB-SubCell"/>
</dbReference>
<dbReference type="GO" id="GO:0003941">
    <property type="term" value="F:L-serine ammonia-lyase activity"/>
    <property type="evidence" value="ECO:0000250"/>
    <property type="project" value="dictyBase"/>
</dbReference>
<dbReference type="GO" id="GO:0030170">
    <property type="term" value="F:pyridoxal phosphate binding"/>
    <property type="evidence" value="ECO:0007669"/>
    <property type="project" value="InterPro"/>
</dbReference>
<dbReference type="GO" id="GO:0004794">
    <property type="term" value="F:threonine deaminase activity"/>
    <property type="evidence" value="ECO:0007669"/>
    <property type="project" value="UniProtKB-ARBA"/>
</dbReference>
<dbReference type="GO" id="GO:0006094">
    <property type="term" value="P:gluconeogenesis"/>
    <property type="evidence" value="ECO:0007669"/>
    <property type="project" value="UniProtKB-UniPathway"/>
</dbReference>
<dbReference type="GO" id="GO:0006565">
    <property type="term" value="P:L-serine catabolic process"/>
    <property type="evidence" value="ECO:0000318"/>
    <property type="project" value="GO_Central"/>
</dbReference>
<dbReference type="CDD" id="cd06448">
    <property type="entry name" value="L-Ser-dehyd"/>
    <property type="match status" value="1"/>
</dbReference>
<dbReference type="FunFam" id="3.40.50.1100:FF:000040">
    <property type="entry name" value="L-serine dehydratase, putative"/>
    <property type="match status" value="1"/>
</dbReference>
<dbReference type="FunFam" id="3.40.50.1100:FF:000091">
    <property type="entry name" value="Related to L-serine dehydratase"/>
    <property type="match status" value="1"/>
</dbReference>
<dbReference type="Gene3D" id="3.40.50.1100">
    <property type="match status" value="2"/>
</dbReference>
<dbReference type="InterPro" id="IPR050147">
    <property type="entry name" value="Ser/Thr_Dehydratase"/>
</dbReference>
<dbReference type="InterPro" id="IPR000634">
    <property type="entry name" value="Ser/Thr_deHydtase_PyrdxlP-BS"/>
</dbReference>
<dbReference type="InterPro" id="IPR001926">
    <property type="entry name" value="TrpB-like_PALP"/>
</dbReference>
<dbReference type="InterPro" id="IPR036052">
    <property type="entry name" value="TrpB-like_PALP_sf"/>
</dbReference>
<dbReference type="PANTHER" id="PTHR48078:SF2">
    <property type="entry name" value="CATABOLIC L-SERINE_THREONINE DEHYDRATASE"/>
    <property type="match status" value="1"/>
</dbReference>
<dbReference type="PANTHER" id="PTHR48078">
    <property type="entry name" value="THREONINE DEHYDRATASE, MITOCHONDRIAL-RELATED"/>
    <property type="match status" value="1"/>
</dbReference>
<dbReference type="Pfam" id="PF00291">
    <property type="entry name" value="PALP"/>
    <property type="match status" value="1"/>
</dbReference>
<dbReference type="SUPFAM" id="SSF53686">
    <property type="entry name" value="Tryptophan synthase beta subunit-like PLP-dependent enzymes"/>
    <property type="match status" value="1"/>
</dbReference>
<dbReference type="PROSITE" id="PS00165">
    <property type="entry name" value="DEHYDRATASE_SER_THR"/>
    <property type="match status" value="1"/>
</dbReference>
<organism>
    <name type="scientific">Dictyostelium discoideum</name>
    <name type="common">Social amoeba</name>
    <dbReference type="NCBI Taxonomy" id="44689"/>
    <lineage>
        <taxon>Eukaryota</taxon>
        <taxon>Amoebozoa</taxon>
        <taxon>Evosea</taxon>
        <taxon>Eumycetozoa</taxon>
        <taxon>Dictyostelia</taxon>
        <taxon>Dictyosteliales</taxon>
        <taxon>Dictyosteliaceae</taxon>
        <taxon>Dictyostelium</taxon>
    </lineage>
</organism>
<protein>
    <recommendedName>
        <fullName>L-serine dehydratase</fullName>
        <shortName>SDH</shortName>
        <ecNumber>4.3.1.17</ecNumber>
    </recommendedName>
    <alternativeName>
        <fullName>L-serine deaminase</fullName>
    </alternativeName>
</protein>
<sequence length="350" mass="38457">MGLKTTISPDSSFDKIINTKTSPPLHINSPMLESLALSKLFKEENAKVWMKVDALQPSGSFKIRGVGLLCNQLLKEKKSKNEEAHFICSSGGNAGKSVAYAGRKLNVKTTIVLPNTIPEATIEKIKDEGANVIVHGTIWDEANTFALELAEKEGCTDCYIHPFDHPLLWEGHSTMIDEIYQDVQNGVCEKPDVILFSVGGGGMMIGILQGLDRYGWNDIPIVTVETVGSHSFWKSFQEKQLTKLDVSEVTSVIKTLSTRSVCSEAWEISKRFNIKPILVTDRDAVDACLKFVDDERILVEPSCGATLSVLYSKKLSTLLDINSKNILTIVCGGNGTSILQLNDLLQTLPK</sequence>
<accession>Q86B06</accession>
<accession>Q558U7</accession>
<proteinExistence type="inferred from homology"/>
<comment type="catalytic activity">
    <reaction>
        <text>L-serine = pyruvate + NH4(+)</text>
        <dbReference type="Rhea" id="RHEA:19169"/>
        <dbReference type="ChEBI" id="CHEBI:15361"/>
        <dbReference type="ChEBI" id="CHEBI:28938"/>
        <dbReference type="ChEBI" id="CHEBI:33384"/>
        <dbReference type="EC" id="4.3.1.17"/>
    </reaction>
</comment>
<comment type="cofactor">
    <cofactor evidence="1">
        <name>pyridoxal 5'-phosphate</name>
        <dbReference type="ChEBI" id="CHEBI:597326"/>
    </cofactor>
</comment>
<comment type="pathway">
    <text>Carbohydrate biosynthesis; gluconeogenesis.</text>
</comment>
<comment type="subcellular location">
    <subcellularLocation>
        <location evidence="1">Cytoplasm</location>
    </subcellularLocation>
</comment>
<comment type="similarity">
    <text evidence="2">Belongs to the serine/threonine dehydratase family.</text>
</comment>